<protein>
    <recommendedName>
        <fullName evidence="1">NADH-quinone oxidoreductase subunit H 1</fullName>
        <ecNumber evidence="1">7.1.1.-</ecNumber>
    </recommendedName>
    <alternativeName>
        <fullName evidence="1">NADH dehydrogenase I subunit H 1</fullName>
    </alternativeName>
    <alternativeName>
        <fullName evidence="1">NDH-1 subunit H 1</fullName>
    </alternativeName>
</protein>
<keyword id="KW-0997">Cell inner membrane</keyword>
<keyword id="KW-1003">Cell membrane</keyword>
<keyword id="KW-0472">Membrane</keyword>
<keyword id="KW-0520">NAD</keyword>
<keyword id="KW-0874">Quinone</keyword>
<keyword id="KW-1278">Translocase</keyword>
<keyword id="KW-0812">Transmembrane</keyword>
<keyword id="KW-1133">Transmembrane helix</keyword>
<keyword id="KW-0830">Ubiquinone</keyword>
<feature type="chain" id="PRO_0000299953" description="NADH-quinone oxidoreductase subunit H 1">
    <location>
        <begin position="1"/>
        <end position="397"/>
    </location>
</feature>
<feature type="transmembrane region" description="Helical" evidence="1">
    <location>
        <begin position="7"/>
        <end position="27"/>
    </location>
</feature>
<feature type="transmembrane region" description="Helical" evidence="1">
    <location>
        <begin position="84"/>
        <end position="104"/>
    </location>
</feature>
<feature type="transmembrane region" description="Helical" evidence="1">
    <location>
        <begin position="120"/>
        <end position="140"/>
    </location>
</feature>
<feature type="transmembrane region" description="Helical" evidence="1">
    <location>
        <begin position="156"/>
        <end position="176"/>
    </location>
</feature>
<feature type="transmembrane region" description="Helical" evidence="1">
    <location>
        <begin position="198"/>
        <end position="218"/>
    </location>
</feature>
<feature type="transmembrane region" description="Helical" evidence="1">
    <location>
        <begin position="258"/>
        <end position="278"/>
    </location>
</feature>
<feature type="transmembrane region" description="Helical" evidence="1">
    <location>
        <begin position="279"/>
        <end position="299"/>
    </location>
</feature>
<feature type="transmembrane region" description="Helical" evidence="1">
    <location>
        <begin position="313"/>
        <end position="333"/>
    </location>
</feature>
<feature type="transmembrane region" description="Helical" evidence="1">
    <location>
        <begin position="337"/>
        <end position="357"/>
    </location>
</feature>
<feature type="transmembrane region" description="Helical" evidence="1">
    <location>
        <begin position="376"/>
        <end position="396"/>
    </location>
</feature>
<gene>
    <name evidence="1" type="primary">nuoH1</name>
    <name type="ordered locus">Acid_0115</name>
</gene>
<sequence length="397" mass="43788">MELLDSFIFISLVKAAVIFGVLMTTLAYLQWVERKVIAHIQVRPGPYRVGPHGLLQPLADVIKLITKEDLVPPYVNKPLYLAAPFLAITMALLSISVIPFGPVIHIGPVTTAMQMTDLNIGVLFILAVSSMGVYGIALAGWASNNKYSLIGGLRSSAQMISYELPMSLAIAAPLLISNTLSLRELVERQAGSILNWNLLSGPFPQVISFIIFIIAAFAETNRVPFDLPEAENELVAGFHTEYSSMKFASFFMAEYANMITVSAMATLLFLGGWMAPWPAAYGSSLVPSILFGISGLVLLYHGVNAVRKRDKLTFPAFGIIFLGIAGIFLLPMVQSWLLPLFWFCAKTGAILFAFMWIRGTLPRFRYDQLMGFTWKFLFPVAMLNLLVTGFLVAWTTK</sequence>
<proteinExistence type="inferred from homology"/>
<organism>
    <name type="scientific">Solibacter usitatus (strain Ellin6076)</name>
    <dbReference type="NCBI Taxonomy" id="234267"/>
    <lineage>
        <taxon>Bacteria</taxon>
        <taxon>Pseudomonadati</taxon>
        <taxon>Acidobacteriota</taxon>
        <taxon>Terriglobia</taxon>
        <taxon>Bryobacterales</taxon>
        <taxon>Solibacteraceae</taxon>
        <taxon>Candidatus Solibacter</taxon>
    </lineage>
</organism>
<evidence type="ECO:0000255" key="1">
    <source>
        <dbReference type="HAMAP-Rule" id="MF_01350"/>
    </source>
</evidence>
<dbReference type="EC" id="7.1.1.-" evidence="1"/>
<dbReference type="EMBL" id="CP000473">
    <property type="protein sequence ID" value="ABJ81130.1"/>
    <property type="molecule type" value="Genomic_DNA"/>
</dbReference>
<dbReference type="SMR" id="Q02CT6"/>
<dbReference type="FunCoup" id="Q02CT6">
    <property type="interactions" value="246"/>
</dbReference>
<dbReference type="STRING" id="234267.Acid_0115"/>
<dbReference type="KEGG" id="sus:Acid_0115"/>
<dbReference type="eggNOG" id="COG1005">
    <property type="taxonomic scope" value="Bacteria"/>
</dbReference>
<dbReference type="HOGENOM" id="CLU_015134_0_1_0"/>
<dbReference type="InParanoid" id="Q02CT6"/>
<dbReference type="OrthoDB" id="9803734at2"/>
<dbReference type="GO" id="GO:0005886">
    <property type="term" value="C:plasma membrane"/>
    <property type="evidence" value="ECO:0007669"/>
    <property type="project" value="UniProtKB-SubCell"/>
</dbReference>
<dbReference type="GO" id="GO:0003954">
    <property type="term" value="F:NADH dehydrogenase activity"/>
    <property type="evidence" value="ECO:0007669"/>
    <property type="project" value="TreeGrafter"/>
</dbReference>
<dbReference type="GO" id="GO:0016655">
    <property type="term" value="F:oxidoreductase activity, acting on NAD(P)H, quinone or similar compound as acceptor"/>
    <property type="evidence" value="ECO:0007669"/>
    <property type="project" value="UniProtKB-UniRule"/>
</dbReference>
<dbReference type="GO" id="GO:0048038">
    <property type="term" value="F:quinone binding"/>
    <property type="evidence" value="ECO:0007669"/>
    <property type="project" value="UniProtKB-KW"/>
</dbReference>
<dbReference type="GO" id="GO:0009060">
    <property type="term" value="P:aerobic respiration"/>
    <property type="evidence" value="ECO:0007669"/>
    <property type="project" value="TreeGrafter"/>
</dbReference>
<dbReference type="HAMAP" id="MF_01350">
    <property type="entry name" value="NDH1_NuoH"/>
    <property type="match status" value="1"/>
</dbReference>
<dbReference type="InterPro" id="IPR001694">
    <property type="entry name" value="NADH_UbQ_OxRdtase_su1/FPO"/>
</dbReference>
<dbReference type="InterPro" id="IPR018086">
    <property type="entry name" value="NADH_UbQ_OxRdtase_su1_CS"/>
</dbReference>
<dbReference type="NCBIfam" id="NF004741">
    <property type="entry name" value="PRK06076.1-2"/>
    <property type="match status" value="1"/>
</dbReference>
<dbReference type="PANTHER" id="PTHR11432">
    <property type="entry name" value="NADH DEHYDROGENASE SUBUNIT 1"/>
    <property type="match status" value="1"/>
</dbReference>
<dbReference type="PANTHER" id="PTHR11432:SF3">
    <property type="entry name" value="NADH-UBIQUINONE OXIDOREDUCTASE CHAIN 1"/>
    <property type="match status" value="1"/>
</dbReference>
<dbReference type="Pfam" id="PF00146">
    <property type="entry name" value="NADHdh"/>
    <property type="match status" value="1"/>
</dbReference>
<dbReference type="PROSITE" id="PS00668">
    <property type="entry name" value="COMPLEX1_ND1_2"/>
    <property type="match status" value="1"/>
</dbReference>
<reference key="1">
    <citation type="journal article" date="2009" name="Appl. Environ. Microbiol.">
        <title>Three genomes from the phylum Acidobacteria provide insight into the lifestyles of these microorganisms in soils.</title>
        <authorList>
            <person name="Ward N.L."/>
            <person name="Challacombe J.F."/>
            <person name="Janssen P.H."/>
            <person name="Henrissat B."/>
            <person name="Coutinho P.M."/>
            <person name="Wu M."/>
            <person name="Xie G."/>
            <person name="Haft D.H."/>
            <person name="Sait M."/>
            <person name="Badger J."/>
            <person name="Barabote R.D."/>
            <person name="Bradley B."/>
            <person name="Brettin T.S."/>
            <person name="Brinkac L.M."/>
            <person name="Bruce D."/>
            <person name="Creasy T."/>
            <person name="Daugherty S.C."/>
            <person name="Davidsen T.M."/>
            <person name="DeBoy R.T."/>
            <person name="Detter J.C."/>
            <person name="Dodson R.J."/>
            <person name="Durkin A.S."/>
            <person name="Ganapathy A."/>
            <person name="Gwinn-Giglio M."/>
            <person name="Han C.S."/>
            <person name="Khouri H."/>
            <person name="Kiss H."/>
            <person name="Kothari S.P."/>
            <person name="Madupu R."/>
            <person name="Nelson K.E."/>
            <person name="Nelson W.C."/>
            <person name="Paulsen I."/>
            <person name="Penn K."/>
            <person name="Ren Q."/>
            <person name="Rosovitz M.J."/>
            <person name="Selengut J.D."/>
            <person name="Shrivastava S."/>
            <person name="Sullivan S.A."/>
            <person name="Tapia R."/>
            <person name="Thompson L.S."/>
            <person name="Watkins K.L."/>
            <person name="Yang Q."/>
            <person name="Yu C."/>
            <person name="Zafar N."/>
            <person name="Zhou L."/>
            <person name="Kuske C.R."/>
        </authorList>
    </citation>
    <scope>NUCLEOTIDE SEQUENCE [LARGE SCALE GENOMIC DNA]</scope>
    <source>
        <strain>Ellin6076</strain>
    </source>
</reference>
<accession>Q02CT6</accession>
<comment type="function">
    <text evidence="1">NDH-1 shuttles electrons from NADH, via FMN and iron-sulfur (Fe-S) centers, to quinones in the respiratory chain. The immediate electron acceptor for the enzyme in this species is believed to be ubiquinone. Couples the redox reaction to proton translocation (for every two electrons transferred, four hydrogen ions are translocated across the cytoplasmic membrane), and thus conserves the redox energy in a proton gradient. This subunit may bind ubiquinone.</text>
</comment>
<comment type="catalytic activity">
    <reaction evidence="1">
        <text>a quinone + NADH + 5 H(+)(in) = a quinol + NAD(+) + 4 H(+)(out)</text>
        <dbReference type="Rhea" id="RHEA:57888"/>
        <dbReference type="ChEBI" id="CHEBI:15378"/>
        <dbReference type="ChEBI" id="CHEBI:24646"/>
        <dbReference type="ChEBI" id="CHEBI:57540"/>
        <dbReference type="ChEBI" id="CHEBI:57945"/>
        <dbReference type="ChEBI" id="CHEBI:132124"/>
    </reaction>
</comment>
<comment type="subunit">
    <text evidence="1">NDH-1 is composed of 14 different subunits. Subunits NuoA, H, J, K, L, M, N constitute the membrane sector of the complex.</text>
</comment>
<comment type="subcellular location">
    <subcellularLocation>
        <location evidence="1">Cell inner membrane</location>
        <topology evidence="1">Multi-pass membrane protein</topology>
    </subcellularLocation>
</comment>
<comment type="similarity">
    <text evidence="1">Belongs to the complex I subunit 1 family.</text>
</comment>
<name>NUOH1_SOLUE</name>